<accession>B6EPT6</accession>
<dbReference type="EMBL" id="FM178379">
    <property type="protein sequence ID" value="CAQ78016.1"/>
    <property type="molecule type" value="Genomic_DNA"/>
</dbReference>
<dbReference type="RefSeq" id="WP_012549160.1">
    <property type="nucleotide sequence ID" value="NC_011312.1"/>
</dbReference>
<dbReference type="SMR" id="B6EPT6"/>
<dbReference type="KEGG" id="vsa:VSAL_I0331"/>
<dbReference type="eggNOG" id="COG0198">
    <property type="taxonomic scope" value="Bacteria"/>
</dbReference>
<dbReference type="HOGENOM" id="CLU_093315_2_2_6"/>
<dbReference type="Proteomes" id="UP000001730">
    <property type="component" value="Chromosome 1"/>
</dbReference>
<dbReference type="GO" id="GO:1990904">
    <property type="term" value="C:ribonucleoprotein complex"/>
    <property type="evidence" value="ECO:0007669"/>
    <property type="project" value="UniProtKB-KW"/>
</dbReference>
<dbReference type="GO" id="GO:0005840">
    <property type="term" value="C:ribosome"/>
    <property type="evidence" value="ECO:0007669"/>
    <property type="project" value="UniProtKB-KW"/>
</dbReference>
<dbReference type="GO" id="GO:0019843">
    <property type="term" value="F:rRNA binding"/>
    <property type="evidence" value="ECO:0007669"/>
    <property type="project" value="UniProtKB-UniRule"/>
</dbReference>
<dbReference type="GO" id="GO:0003735">
    <property type="term" value="F:structural constituent of ribosome"/>
    <property type="evidence" value="ECO:0007669"/>
    <property type="project" value="InterPro"/>
</dbReference>
<dbReference type="GO" id="GO:0006412">
    <property type="term" value="P:translation"/>
    <property type="evidence" value="ECO:0007669"/>
    <property type="project" value="UniProtKB-UniRule"/>
</dbReference>
<dbReference type="CDD" id="cd06089">
    <property type="entry name" value="KOW_RPL26"/>
    <property type="match status" value="1"/>
</dbReference>
<dbReference type="FunFam" id="2.30.30.30:FF:000004">
    <property type="entry name" value="50S ribosomal protein L24"/>
    <property type="match status" value="1"/>
</dbReference>
<dbReference type="Gene3D" id="2.30.30.30">
    <property type="match status" value="1"/>
</dbReference>
<dbReference type="HAMAP" id="MF_01326_B">
    <property type="entry name" value="Ribosomal_uL24_B"/>
    <property type="match status" value="1"/>
</dbReference>
<dbReference type="InterPro" id="IPR005824">
    <property type="entry name" value="KOW"/>
</dbReference>
<dbReference type="InterPro" id="IPR014722">
    <property type="entry name" value="Rib_uL2_dom2"/>
</dbReference>
<dbReference type="InterPro" id="IPR003256">
    <property type="entry name" value="Ribosomal_uL24"/>
</dbReference>
<dbReference type="InterPro" id="IPR005825">
    <property type="entry name" value="Ribosomal_uL24_CS"/>
</dbReference>
<dbReference type="InterPro" id="IPR041988">
    <property type="entry name" value="Ribosomal_uL24_KOW"/>
</dbReference>
<dbReference type="InterPro" id="IPR008991">
    <property type="entry name" value="Translation_prot_SH3-like_sf"/>
</dbReference>
<dbReference type="NCBIfam" id="TIGR01079">
    <property type="entry name" value="rplX_bact"/>
    <property type="match status" value="1"/>
</dbReference>
<dbReference type="PANTHER" id="PTHR12903">
    <property type="entry name" value="MITOCHONDRIAL RIBOSOMAL PROTEIN L24"/>
    <property type="match status" value="1"/>
</dbReference>
<dbReference type="Pfam" id="PF00467">
    <property type="entry name" value="KOW"/>
    <property type="match status" value="1"/>
</dbReference>
<dbReference type="Pfam" id="PF17136">
    <property type="entry name" value="ribosomal_L24"/>
    <property type="match status" value="1"/>
</dbReference>
<dbReference type="SMART" id="SM00739">
    <property type="entry name" value="KOW"/>
    <property type="match status" value="1"/>
</dbReference>
<dbReference type="SUPFAM" id="SSF50104">
    <property type="entry name" value="Translation proteins SH3-like domain"/>
    <property type="match status" value="1"/>
</dbReference>
<dbReference type="PROSITE" id="PS01108">
    <property type="entry name" value="RIBOSOMAL_L24"/>
    <property type="match status" value="1"/>
</dbReference>
<evidence type="ECO:0000255" key="1">
    <source>
        <dbReference type="HAMAP-Rule" id="MF_01326"/>
    </source>
</evidence>
<evidence type="ECO:0000305" key="2"/>
<protein>
    <recommendedName>
        <fullName evidence="1">Large ribosomal subunit protein uL24</fullName>
    </recommendedName>
    <alternativeName>
        <fullName evidence="2">50S ribosomal protein L24</fullName>
    </alternativeName>
</protein>
<gene>
    <name evidence="1" type="primary">rplX</name>
    <name type="ordered locus">VSAL_I0331</name>
</gene>
<comment type="function">
    <text evidence="1">One of two assembly initiator proteins, it binds directly to the 5'-end of the 23S rRNA, where it nucleates assembly of the 50S subunit.</text>
</comment>
<comment type="function">
    <text evidence="1">One of the proteins that surrounds the polypeptide exit tunnel on the outside of the subunit.</text>
</comment>
<comment type="subunit">
    <text evidence="1">Part of the 50S ribosomal subunit.</text>
</comment>
<comment type="similarity">
    <text evidence="1">Belongs to the universal ribosomal protein uL24 family.</text>
</comment>
<proteinExistence type="inferred from homology"/>
<organism>
    <name type="scientific">Aliivibrio salmonicida (strain LFI1238)</name>
    <name type="common">Vibrio salmonicida (strain LFI1238)</name>
    <dbReference type="NCBI Taxonomy" id="316275"/>
    <lineage>
        <taxon>Bacteria</taxon>
        <taxon>Pseudomonadati</taxon>
        <taxon>Pseudomonadota</taxon>
        <taxon>Gammaproteobacteria</taxon>
        <taxon>Vibrionales</taxon>
        <taxon>Vibrionaceae</taxon>
        <taxon>Aliivibrio</taxon>
    </lineage>
</organism>
<keyword id="KW-0687">Ribonucleoprotein</keyword>
<keyword id="KW-0689">Ribosomal protein</keyword>
<keyword id="KW-0694">RNA-binding</keyword>
<keyword id="KW-0699">rRNA-binding</keyword>
<sequence length="105" mass="11390">MAAKIRRNDEVIVLVGKDKGKKGKVTKVLETGKVIVEGINLVKKHQKPVPALGQQGGIVEKEAAIDASNIAIFNDATGKADRIGFRFEEGKKVRFFKSNGETISN</sequence>
<reference key="1">
    <citation type="journal article" date="2008" name="BMC Genomics">
        <title>The genome sequence of the fish pathogen Aliivibrio salmonicida strain LFI1238 shows extensive evidence of gene decay.</title>
        <authorList>
            <person name="Hjerde E."/>
            <person name="Lorentzen M.S."/>
            <person name="Holden M.T."/>
            <person name="Seeger K."/>
            <person name="Paulsen S."/>
            <person name="Bason N."/>
            <person name="Churcher C."/>
            <person name="Harris D."/>
            <person name="Norbertczak H."/>
            <person name="Quail M.A."/>
            <person name="Sanders S."/>
            <person name="Thurston S."/>
            <person name="Parkhill J."/>
            <person name="Willassen N.P."/>
            <person name="Thomson N.R."/>
        </authorList>
    </citation>
    <scope>NUCLEOTIDE SEQUENCE [LARGE SCALE GENOMIC DNA]</scope>
    <source>
        <strain>LFI1238</strain>
    </source>
</reference>
<name>RL24_ALISL</name>
<feature type="chain" id="PRO_1000141955" description="Large ribosomal subunit protein uL24">
    <location>
        <begin position="1"/>
        <end position="105"/>
    </location>
</feature>